<dbReference type="EMBL" id="AL391711">
    <property type="protein sequence ID" value="CAC05443.1"/>
    <property type="molecule type" value="Genomic_DNA"/>
</dbReference>
<dbReference type="EMBL" id="CP002688">
    <property type="protein sequence ID" value="AED91857.1"/>
    <property type="molecule type" value="Genomic_DNA"/>
</dbReference>
<dbReference type="RefSeq" id="NP_196819.1">
    <property type="nucleotide sequence ID" value="NM_121318.3"/>
</dbReference>
<dbReference type="SMR" id="Q9FY95"/>
<dbReference type="FunCoup" id="Q9FY95">
    <property type="interactions" value="3307"/>
</dbReference>
<dbReference type="STRING" id="3702.Q9FY95"/>
<dbReference type="iPTMnet" id="Q9FY95"/>
<dbReference type="PaxDb" id="3702-AT5G13150.1"/>
<dbReference type="ProteomicsDB" id="183010"/>
<dbReference type="EnsemblPlants" id="AT5G13150.1">
    <property type="protein sequence ID" value="AT5G13150.1"/>
    <property type="gene ID" value="AT5G13150"/>
</dbReference>
<dbReference type="GeneID" id="831154"/>
<dbReference type="Gramene" id="AT5G13150.1">
    <property type="protein sequence ID" value="AT5G13150.1"/>
    <property type="gene ID" value="AT5G13150"/>
</dbReference>
<dbReference type="KEGG" id="ath:AT5G13150"/>
<dbReference type="Araport" id="AT5G13150"/>
<dbReference type="TAIR" id="AT5G13150">
    <property type="gene designation" value="EXO70C1"/>
</dbReference>
<dbReference type="eggNOG" id="KOG2344">
    <property type="taxonomic scope" value="Eukaryota"/>
</dbReference>
<dbReference type="HOGENOM" id="CLU_010236_2_1_1"/>
<dbReference type="InParanoid" id="Q9FY95"/>
<dbReference type="OMA" id="ENECCMV"/>
<dbReference type="PRO" id="PR:Q9FY95"/>
<dbReference type="Proteomes" id="UP000006548">
    <property type="component" value="Chromosome 5"/>
</dbReference>
<dbReference type="ExpressionAtlas" id="Q9FY95">
    <property type="expression patterns" value="baseline and differential"/>
</dbReference>
<dbReference type="GO" id="GO:0005737">
    <property type="term" value="C:cytoplasm"/>
    <property type="evidence" value="ECO:0000314"/>
    <property type="project" value="UniProtKB"/>
</dbReference>
<dbReference type="GO" id="GO:0000145">
    <property type="term" value="C:exocyst"/>
    <property type="evidence" value="ECO:0007669"/>
    <property type="project" value="InterPro"/>
</dbReference>
<dbReference type="GO" id="GO:0005634">
    <property type="term" value="C:nucleus"/>
    <property type="evidence" value="ECO:0000314"/>
    <property type="project" value="TAIR"/>
</dbReference>
<dbReference type="GO" id="GO:0090406">
    <property type="term" value="C:pollen tube"/>
    <property type="evidence" value="ECO:0000314"/>
    <property type="project" value="TAIR"/>
</dbReference>
<dbReference type="GO" id="GO:0005546">
    <property type="term" value="F:phosphatidylinositol-4,5-bisphosphate binding"/>
    <property type="evidence" value="ECO:0007669"/>
    <property type="project" value="InterPro"/>
</dbReference>
<dbReference type="GO" id="GO:0006887">
    <property type="term" value="P:exocytosis"/>
    <property type="evidence" value="ECO:0007669"/>
    <property type="project" value="UniProtKB-KW"/>
</dbReference>
<dbReference type="GO" id="GO:0015031">
    <property type="term" value="P:protein transport"/>
    <property type="evidence" value="ECO:0007669"/>
    <property type="project" value="UniProtKB-KW"/>
</dbReference>
<dbReference type="GO" id="GO:0080092">
    <property type="term" value="P:regulation of pollen tube growth"/>
    <property type="evidence" value="ECO:0000315"/>
    <property type="project" value="UniProtKB"/>
</dbReference>
<dbReference type="GO" id="GO:2000280">
    <property type="term" value="P:regulation of root development"/>
    <property type="evidence" value="ECO:0000315"/>
    <property type="project" value="UniProtKB"/>
</dbReference>
<dbReference type="FunFam" id="1.20.1280.170:FF:000003">
    <property type="entry name" value="Exocyst subunit Exo70 family protein"/>
    <property type="match status" value="1"/>
</dbReference>
<dbReference type="Gene3D" id="1.20.1280.170">
    <property type="entry name" value="Exocyst complex component Exo70"/>
    <property type="match status" value="1"/>
</dbReference>
<dbReference type="InterPro" id="IPR016159">
    <property type="entry name" value="Cullin_repeat-like_dom_sf"/>
</dbReference>
<dbReference type="InterPro" id="IPR004140">
    <property type="entry name" value="Exo70"/>
</dbReference>
<dbReference type="InterPro" id="IPR046364">
    <property type="entry name" value="Exo70_C"/>
</dbReference>
<dbReference type="PANTHER" id="PTHR12542:SF127">
    <property type="entry name" value="EXOCYST COMPLEX COMPONENT EXO70C1"/>
    <property type="match status" value="1"/>
</dbReference>
<dbReference type="PANTHER" id="PTHR12542">
    <property type="entry name" value="EXOCYST COMPLEX PROTEIN EXO70"/>
    <property type="match status" value="1"/>
</dbReference>
<dbReference type="Pfam" id="PF03081">
    <property type="entry name" value="Exo70_C"/>
    <property type="match status" value="1"/>
</dbReference>
<dbReference type="Pfam" id="PF20669">
    <property type="entry name" value="Exo70_N"/>
    <property type="match status" value="1"/>
</dbReference>
<dbReference type="SUPFAM" id="SSF74788">
    <property type="entry name" value="Cullin repeat-like"/>
    <property type="match status" value="1"/>
</dbReference>
<name>E70C1_ARATH</name>
<protein>
    <recommendedName>
        <fullName evidence="6">Exocyst complex component EXO70C1</fullName>
        <shortName evidence="6">AtExo70C1</shortName>
    </recommendedName>
    <alternativeName>
        <fullName evidence="6">Exocyst subunit Exo70 family protein C1</fullName>
    </alternativeName>
</protein>
<proteinExistence type="evidence at protein level"/>
<sequence>MEKSGNHHHANESSENHDHKSEDHENKQHSDELHSSTPESQSESSEHSLVEVMEAVVDFIQTLSSEKDPLGEISPAVESFPEAVDSLVSKMESSGLGRDETEDSVFIDAVNRISKSVMRLRELKLDSTPVSSWLNRASSVQHRAVSLLDEEFRHLLDRSREEEKKNNNNNNHHDGSNSDHNNSSTNDSDRCVLQDHEEAEEESFHDFSPESISTLKKIAGAMISAGYEAECCMSYEMSRRHAFKEELTEVGFEGINVEDVQRIGWESLEGEIASWISIVRRCSTVLFPGELSLCNAVFPDQDHSSVRKRLFTGLVSAVTIRFLDFSGAVVLTKRSSEKLFKFLDMYETLRDLIPAVEQSDSDLIQEIKLAQTRLGEAAVTIFGELEKSIKSDNGRTPVPSGAVHPLTRYTMNYLKYACEYKETLDQVFQHYEANQTDNKPEPETKPRQQQREDDEEYKVSAFARQMIRVMELLDANLEIKSRLYRDPSLRFIFLMNNGRYILQKIKGSIEIRDLMGQSWTRKRSTELRQYHKSYQRETWGKVLQCMNQEGLQVNGKVSKPVLKERFKIFNAMFDEIHKTQSTWIVSDEQMQSELRVSISSLVIPAYRSFFGRYKQHLDSGKQTDKYVKYQPEDIESFIDDLFDGNPTSMARKR</sequence>
<reference key="1">
    <citation type="journal article" date="2000" name="Nature">
        <title>Sequence and analysis of chromosome 5 of the plant Arabidopsis thaliana.</title>
        <authorList>
            <person name="Tabata S."/>
            <person name="Kaneko T."/>
            <person name="Nakamura Y."/>
            <person name="Kotani H."/>
            <person name="Kato T."/>
            <person name="Asamizu E."/>
            <person name="Miyajima N."/>
            <person name="Sasamoto S."/>
            <person name="Kimura T."/>
            <person name="Hosouchi T."/>
            <person name="Kawashima K."/>
            <person name="Kohara M."/>
            <person name="Matsumoto M."/>
            <person name="Matsuno A."/>
            <person name="Muraki A."/>
            <person name="Nakayama S."/>
            <person name="Nakazaki N."/>
            <person name="Naruo K."/>
            <person name="Okumura S."/>
            <person name="Shinpo S."/>
            <person name="Takeuchi C."/>
            <person name="Wada T."/>
            <person name="Watanabe A."/>
            <person name="Yamada M."/>
            <person name="Yasuda M."/>
            <person name="Sato S."/>
            <person name="de la Bastide M."/>
            <person name="Huang E."/>
            <person name="Spiegel L."/>
            <person name="Gnoj L."/>
            <person name="O'Shaughnessy A."/>
            <person name="Preston R."/>
            <person name="Habermann K."/>
            <person name="Murray J."/>
            <person name="Johnson D."/>
            <person name="Rohlfing T."/>
            <person name="Nelson J."/>
            <person name="Stoneking T."/>
            <person name="Pepin K."/>
            <person name="Spieth J."/>
            <person name="Sekhon M."/>
            <person name="Armstrong J."/>
            <person name="Becker M."/>
            <person name="Belter E."/>
            <person name="Cordum H."/>
            <person name="Cordes M."/>
            <person name="Courtney L."/>
            <person name="Courtney W."/>
            <person name="Dante M."/>
            <person name="Du H."/>
            <person name="Edwards J."/>
            <person name="Fryman J."/>
            <person name="Haakensen B."/>
            <person name="Lamar E."/>
            <person name="Latreille P."/>
            <person name="Leonard S."/>
            <person name="Meyer R."/>
            <person name="Mulvaney E."/>
            <person name="Ozersky P."/>
            <person name="Riley A."/>
            <person name="Strowmatt C."/>
            <person name="Wagner-McPherson C."/>
            <person name="Wollam A."/>
            <person name="Yoakum M."/>
            <person name="Bell M."/>
            <person name="Dedhia N."/>
            <person name="Parnell L."/>
            <person name="Shah R."/>
            <person name="Rodriguez M."/>
            <person name="Hoon See L."/>
            <person name="Vil D."/>
            <person name="Baker J."/>
            <person name="Kirchoff K."/>
            <person name="Toth K."/>
            <person name="King L."/>
            <person name="Bahret A."/>
            <person name="Miller B."/>
            <person name="Marra M.A."/>
            <person name="Martienssen R."/>
            <person name="McCombie W.R."/>
            <person name="Wilson R.K."/>
            <person name="Murphy G."/>
            <person name="Bancroft I."/>
            <person name="Volckaert G."/>
            <person name="Wambutt R."/>
            <person name="Duesterhoeft A."/>
            <person name="Stiekema W."/>
            <person name="Pohl T."/>
            <person name="Entian K.-D."/>
            <person name="Terryn N."/>
            <person name="Hartley N."/>
            <person name="Bent E."/>
            <person name="Johnson S."/>
            <person name="Langham S.-A."/>
            <person name="McCullagh B."/>
            <person name="Robben J."/>
            <person name="Grymonprez B."/>
            <person name="Zimmermann W."/>
            <person name="Ramsperger U."/>
            <person name="Wedler H."/>
            <person name="Balke K."/>
            <person name="Wedler E."/>
            <person name="Peters S."/>
            <person name="van Staveren M."/>
            <person name="Dirkse W."/>
            <person name="Mooijman P."/>
            <person name="Klein Lankhorst R."/>
            <person name="Weitzenegger T."/>
            <person name="Bothe G."/>
            <person name="Rose M."/>
            <person name="Hauf J."/>
            <person name="Berneiser S."/>
            <person name="Hempel S."/>
            <person name="Feldpausch M."/>
            <person name="Lamberth S."/>
            <person name="Villarroel R."/>
            <person name="Gielen J."/>
            <person name="Ardiles W."/>
            <person name="Bents O."/>
            <person name="Lemcke K."/>
            <person name="Kolesov G."/>
            <person name="Mayer K.F.X."/>
            <person name="Rudd S."/>
            <person name="Schoof H."/>
            <person name="Schueller C."/>
            <person name="Zaccaria P."/>
            <person name="Mewes H.-W."/>
            <person name="Bevan M."/>
            <person name="Fransz P.F."/>
        </authorList>
    </citation>
    <scope>NUCLEOTIDE SEQUENCE [LARGE SCALE GENOMIC DNA]</scope>
    <source>
        <strain>cv. Columbia</strain>
    </source>
</reference>
<reference key="2">
    <citation type="journal article" date="2017" name="Plant J.">
        <title>Araport11: a complete reannotation of the Arabidopsis thaliana reference genome.</title>
        <authorList>
            <person name="Cheng C.Y."/>
            <person name="Krishnakumar V."/>
            <person name="Chan A.P."/>
            <person name="Thibaud-Nissen F."/>
            <person name="Schobel S."/>
            <person name="Town C.D."/>
        </authorList>
    </citation>
    <scope>GENOME REANNOTATION</scope>
    <source>
        <strain>cv. Columbia</strain>
    </source>
</reference>
<reference key="3">
    <citation type="journal article" date="2010" name="New Phytol.">
        <title>Arabidopsis exocyst subunits SEC8 and EXO70A1 and exocyst interactor ROH1 are involved in the localized deposition of seed coat pectin.</title>
        <authorList>
            <person name="Kulich I."/>
            <person name="Cole R."/>
            <person name="Drdova E."/>
            <person name="Cvrckova F."/>
            <person name="Soukup A."/>
            <person name="Fowler J."/>
            <person name="Zarsky V."/>
        </authorList>
    </citation>
    <scope>INTERACTION WITH ROH1A</scope>
</reference>
<reference key="4">
    <citation type="journal article" date="2010" name="Plant Physiol.">
        <title>Expression and functional analyses of EXO70 genes in Arabidopsis implicate their roles in regulating cell type-specific exocytosis.</title>
        <authorList>
            <person name="Li S."/>
            <person name="van Os G.M.A."/>
            <person name="Ren S."/>
            <person name="Yu D."/>
            <person name="Ketelaar T."/>
            <person name="Emons A.M.C."/>
            <person name="Liu C.-M."/>
        </authorList>
    </citation>
    <scope>FUNCTION</scope>
    <scope>DISRUPTION PHENOTYPE</scope>
    <scope>TISSUE SPECIFICITY</scope>
    <scope>DEVELOPMENTAL STAGE</scope>
</reference>
<reference key="5">
    <citation type="journal article" date="2016" name="Front. Cell Dev. Biol.">
        <title>Tethering complexes in the Arabidopsis endomembrane system.</title>
        <authorList>
            <person name="Vukasinovic N."/>
            <person name="Zarsky V."/>
        </authorList>
    </citation>
    <scope>REVIEW</scope>
</reference>
<reference key="6">
    <citation type="journal article" date="2017" name="Plant Physiol.">
        <title>EXO70C2 is a key regulatory factor for optimal tip growth of pollen.</title>
        <authorList>
            <person name="Synek L."/>
            <person name="Vukasinovic N."/>
            <person name="Kulich I."/>
            <person name="Hala M."/>
            <person name="Aldorfova K."/>
            <person name="Fendrych M."/>
            <person name="Zarsky V."/>
        </authorList>
    </citation>
    <scope>FUNCTION</scope>
    <scope>DISRUPTION PHENOTYPE</scope>
    <scope>TISSUE SPECIFICITY</scope>
    <scope>SUBCELLULAR LOCATION</scope>
    <scope>INTERACTION WITH ROH1A</scope>
    <scope>PHOSPHORYLATION</scope>
    <source>
        <strain>cv. Columbia</strain>
        <strain>cv. Landsberg erecta</strain>
    </source>
</reference>
<reference key="7">
    <citation type="journal article" date="2022" name="J. Integr. Plant Biol.">
        <title>BYPASS1-LIKE regulates lateral root initiation via exocytic vesicular trafficking-mediated PIN recycling in Arabidopsis.</title>
        <authorList>
            <person name="Yang G."/>
            <person name="Chen B.-X."/>
            <person name="Chen T."/>
            <person name="Chen J.-H."/>
            <person name="Lin X.-Y."/>
            <person name="Yue X.-L."/>
            <person name="An L.-Z."/>
            <person name="Zhang H."/>
        </authorList>
    </citation>
    <scope>INTERACTION WITH B1L</scope>
    <source>
        <strain>cv. Columbia</strain>
    </source>
</reference>
<accession>Q9FY95</accession>
<comment type="function">
    <text evidence="3 4">Required for global plant growth and for male transmission (PubMed:20943851). Involved in the regulation of tip growth of pollen tube (PubMed:20943851, PubMed:28356503).</text>
</comment>
<comment type="subunit">
    <text evidence="2 4 5">Interacts with ROH1A (PubMed:20618910, PubMed:28356503). Binds directly to B1L (PubMed:35249253).</text>
</comment>
<comment type="subcellular location">
    <subcellularLocation>
        <location evidence="4">Cytoplasm</location>
    </subcellularLocation>
    <text evidence="4">Localized in the cytoplasm of pollen tubes and trichoblast cells.</text>
</comment>
<comment type="tissue specificity">
    <text evidence="3 4">Expressed in anthers, pollen and root trichoblast cells.</text>
</comment>
<comment type="developmental stage">
    <text evidence="3">Expressed in developing guard cells but not in mature ones (PubMed:20943851). During male gametogenesis, observed in microspores and pollen (PubMed:20943851).</text>
</comment>
<comment type="PTM">
    <text evidence="8">Phosphorylated.</text>
</comment>
<comment type="disruption phenotype">
    <text evidence="3 4">Shorter roots, slow growing and reduced seed set (PubMed:20943851). Slightly reduced male transmission and retarded pollen tube growth (PubMed:20943851, PubMed:28356503). Complete inactivation of pollen-specific transmission due to abnormal pollen tube growth in plants lacking both EXO70C1 and EXO70C2 (PubMed:28356503).</text>
</comment>
<comment type="similarity">
    <text evidence="7">Belongs to the EXO70 family.</text>
</comment>
<organism>
    <name type="scientific">Arabidopsis thaliana</name>
    <name type="common">Mouse-ear cress</name>
    <dbReference type="NCBI Taxonomy" id="3702"/>
    <lineage>
        <taxon>Eukaryota</taxon>
        <taxon>Viridiplantae</taxon>
        <taxon>Streptophyta</taxon>
        <taxon>Embryophyta</taxon>
        <taxon>Tracheophyta</taxon>
        <taxon>Spermatophyta</taxon>
        <taxon>Magnoliopsida</taxon>
        <taxon>eudicotyledons</taxon>
        <taxon>Gunneridae</taxon>
        <taxon>Pentapetalae</taxon>
        <taxon>rosids</taxon>
        <taxon>malvids</taxon>
        <taxon>Brassicales</taxon>
        <taxon>Brassicaceae</taxon>
        <taxon>Camelineae</taxon>
        <taxon>Arabidopsis</taxon>
    </lineage>
</organism>
<gene>
    <name evidence="6" type="primary">EXO70C1</name>
    <name evidence="9" type="ordered locus">At5g13150</name>
    <name evidence="10" type="ORF">T19L5.110</name>
</gene>
<keyword id="KW-0963">Cytoplasm</keyword>
<keyword id="KW-0217">Developmental protein</keyword>
<keyword id="KW-0268">Exocytosis</keyword>
<keyword id="KW-0597">Phosphoprotein</keyword>
<keyword id="KW-0653">Protein transport</keyword>
<keyword id="KW-1185">Reference proteome</keyword>
<keyword id="KW-0813">Transport</keyword>
<feature type="chain" id="PRO_0000458272" description="Exocyst complex component EXO70C1">
    <location>
        <begin position="1"/>
        <end position="653"/>
    </location>
</feature>
<feature type="region of interest" description="Disordered" evidence="1">
    <location>
        <begin position="1"/>
        <end position="50"/>
    </location>
</feature>
<feature type="region of interest" description="Disordered" evidence="1">
    <location>
        <begin position="159"/>
        <end position="190"/>
    </location>
</feature>
<feature type="region of interest" description="Disordered" evidence="1">
    <location>
        <begin position="432"/>
        <end position="456"/>
    </location>
</feature>
<feature type="compositionally biased region" description="Basic and acidic residues" evidence="1">
    <location>
        <begin position="1"/>
        <end position="34"/>
    </location>
</feature>
<feature type="compositionally biased region" description="Basic and acidic residues" evidence="1">
    <location>
        <begin position="159"/>
        <end position="177"/>
    </location>
</feature>
<feature type="compositionally biased region" description="Basic and acidic residues" evidence="1">
    <location>
        <begin position="438"/>
        <end position="451"/>
    </location>
</feature>
<evidence type="ECO:0000256" key="1">
    <source>
        <dbReference type="SAM" id="MobiDB-lite"/>
    </source>
</evidence>
<evidence type="ECO:0000269" key="2">
    <source>
    </source>
</evidence>
<evidence type="ECO:0000269" key="3">
    <source>
    </source>
</evidence>
<evidence type="ECO:0000269" key="4">
    <source>
    </source>
</evidence>
<evidence type="ECO:0000269" key="5">
    <source>
    </source>
</evidence>
<evidence type="ECO:0000303" key="6">
    <source>
    </source>
</evidence>
<evidence type="ECO:0000305" key="7"/>
<evidence type="ECO:0000305" key="8">
    <source>
    </source>
</evidence>
<evidence type="ECO:0000312" key="9">
    <source>
        <dbReference type="Araport" id="AT5G13150"/>
    </source>
</evidence>
<evidence type="ECO:0000312" key="10">
    <source>
        <dbReference type="EMBL" id="CAC05443.1"/>
    </source>
</evidence>